<accession>D4AXC1</accession>
<gene>
    <name type="ORF">ARB_00849</name>
</gene>
<name>NPIIE_ARTBC</name>
<comment type="function">
    <text evidence="1">Probable secreted metalloprotease that shows high activities on basic nuclear substrates such as histone and protamine (By similarity). May be involved in virulence.</text>
</comment>
<comment type="catalytic activity">
    <reaction>
        <text>Preferential cleavage of bonds with hydrophobic residues in P1'. Also 3-Asn-|-Gln-4 and 8-Gly-|-Ser-9 bonds in insulin B chain.</text>
        <dbReference type="EC" id="3.4.24.39"/>
    </reaction>
</comment>
<comment type="cofactor">
    <cofactor evidence="1">
        <name>Zn(2+)</name>
        <dbReference type="ChEBI" id="CHEBI:29105"/>
    </cofactor>
    <text evidence="1">Binds 1 zinc ion per subunit.</text>
</comment>
<comment type="subcellular location">
    <subcellularLocation>
        <location evidence="4">Secreted</location>
    </subcellularLocation>
</comment>
<comment type="similarity">
    <text evidence="4">Belongs to the peptidase M35 family.</text>
</comment>
<feature type="signal peptide" evidence="2">
    <location>
        <begin position="1"/>
        <end position="19"/>
    </location>
</feature>
<feature type="propeptide" id="PRO_0000397754" evidence="1">
    <location>
        <begin position="20"/>
        <end position="189"/>
    </location>
</feature>
<feature type="chain" id="PRO_0000397755" description="Probable neutral protease 2 homolog ARB_00849">
    <location>
        <begin position="190"/>
        <end position="374"/>
    </location>
</feature>
<feature type="active site" evidence="3">
    <location>
        <position position="319"/>
    </location>
</feature>
<feature type="binding site" evidence="3">
    <location>
        <position position="318"/>
    </location>
    <ligand>
        <name>Zn(2+)</name>
        <dbReference type="ChEBI" id="CHEBI:29105"/>
        <note>catalytic</note>
    </ligand>
</feature>
<feature type="binding site" evidence="3">
    <location>
        <position position="322"/>
    </location>
    <ligand>
        <name>Zn(2+)</name>
        <dbReference type="ChEBI" id="CHEBI:29105"/>
        <note>catalytic</note>
    </ligand>
</feature>
<feature type="binding site" evidence="3">
    <location>
        <position position="333"/>
    </location>
    <ligand>
        <name>Zn(2+)</name>
        <dbReference type="ChEBI" id="CHEBI:29105"/>
        <note>catalytic</note>
    </ligand>
</feature>
<feature type="disulfide bond" evidence="1">
    <location>
        <begin position="197"/>
        <end position="268"/>
    </location>
</feature>
<feature type="disulfide bond" evidence="1">
    <location>
        <begin position="275"/>
        <end position="293"/>
    </location>
</feature>
<organism>
    <name type="scientific">Arthroderma benhamiae (strain ATCC MYA-4681 / CBS 112371)</name>
    <name type="common">Trichophyton mentagrophytes</name>
    <dbReference type="NCBI Taxonomy" id="663331"/>
    <lineage>
        <taxon>Eukaryota</taxon>
        <taxon>Fungi</taxon>
        <taxon>Dikarya</taxon>
        <taxon>Ascomycota</taxon>
        <taxon>Pezizomycotina</taxon>
        <taxon>Eurotiomycetes</taxon>
        <taxon>Eurotiomycetidae</taxon>
        <taxon>Onygenales</taxon>
        <taxon>Arthrodermataceae</taxon>
        <taxon>Trichophyton</taxon>
    </lineage>
</organism>
<protein>
    <recommendedName>
        <fullName>Probable neutral protease 2 homolog ARB_00849</fullName>
        <ecNumber>3.4.24.39</ecNumber>
    </recommendedName>
    <alternativeName>
        <fullName>Deuterolysin ARB_00849</fullName>
    </alternativeName>
</protein>
<reference key="1">
    <citation type="journal article" date="2011" name="Genome Biol.">
        <title>Comparative and functional genomics provide insights into the pathogenicity of dermatophytic fungi.</title>
        <authorList>
            <person name="Burmester A."/>
            <person name="Shelest E."/>
            <person name="Gloeckner G."/>
            <person name="Heddergott C."/>
            <person name="Schindler S."/>
            <person name="Staib P."/>
            <person name="Heidel A."/>
            <person name="Felder M."/>
            <person name="Petzold A."/>
            <person name="Szafranski K."/>
            <person name="Feuermann M."/>
            <person name="Pedruzzi I."/>
            <person name="Priebe S."/>
            <person name="Groth M."/>
            <person name="Winkler R."/>
            <person name="Li W."/>
            <person name="Kniemeyer O."/>
            <person name="Schroeckh V."/>
            <person name="Hertweck C."/>
            <person name="Hube B."/>
            <person name="White T.C."/>
            <person name="Platzer M."/>
            <person name="Guthke R."/>
            <person name="Heitman J."/>
            <person name="Woestemeyer J."/>
            <person name="Zipfel P.F."/>
            <person name="Monod M."/>
            <person name="Brakhage A.A."/>
        </authorList>
    </citation>
    <scope>NUCLEOTIDE SEQUENCE [LARGE SCALE GENOMIC DNA]</scope>
    <source>
        <strain>ATCC MYA-4681 / CBS 112371</strain>
    </source>
</reference>
<keyword id="KW-0165">Cleavage on pair of basic residues</keyword>
<keyword id="KW-1015">Disulfide bond</keyword>
<keyword id="KW-0378">Hydrolase</keyword>
<keyword id="KW-0479">Metal-binding</keyword>
<keyword id="KW-0482">Metalloprotease</keyword>
<keyword id="KW-0645">Protease</keyword>
<keyword id="KW-1185">Reference proteome</keyword>
<keyword id="KW-0964">Secreted</keyword>
<keyword id="KW-0732">Signal</keyword>
<keyword id="KW-0843">Virulence</keyword>
<keyword id="KW-0862">Zinc</keyword>
<keyword id="KW-0865">Zymogen</keyword>
<dbReference type="EC" id="3.4.24.39"/>
<dbReference type="EMBL" id="ABSU01000016">
    <property type="protein sequence ID" value="EFE32326.1"/>
    <property type="molecule type" value="Genomic_DNA"/>
</dbReference>
<dbReference type="RefSeq" id="XP_003012966.1">
    <property type="nucleotide sequence ID" value="XM_003012920.1"/>
</dbReference>
<dbReference type="SMR" id="D4AXC1"/>
<dbReference type="STRING" id="663331.D4AXC1"/>
<dbReference type="MEROPS" id="M35.001"/>
<dbReference type="GeneID" id="9523045"/>
<dbReference type="KEGG" id="abe:ARB_00849"/>
<dbReference type="eggNOG" id="ENOG502SGF5">
    <property type="taxonomic scope" value="Eukaryota"/>
</dbReference>
<dbReference type="HOGENOM" id="CLU_039313_1_0_1"/>
<dbReference type="OMA" id="ANCDLYY"/>
<dbReference type="Proteomes" id="UP000008866">
    <property type="component" value="Unassembled WGS sequence"/>
</dbReference>
<dbReference type="GO" id="GO:0005576">
    <property type="term" value="C:extracellular region"/>
    <property type="evidence" value="ECO:0007669"/>
    <property type="project" value="UniProtKB-SubCell"/>
</dbReference>
<dbReference type="GO" id="GO:0046872">
    <property type="term" value="F:metal ion binding"/>
    <property type="evidence" value="ECO:0007669"/>
    <property type="project" value="UniProtKB-KW"/>
</dbReference>
<dbReference type="GO" id="GO:0004222">
    <property type="term" value="F:metalloendopeptidase activity"/>
    <property type="evidence" value="ECO:0007669"/>
    <property type="project" value="InterPro"/>
</dbReference>
<dbReference type="GO" id="GO:0006508">
    <property type="term" value="P:proteolysis"/>
    <property type="evidence" value="ECO:0007669"/>
    <property type="project" value="UniProtKB-KW"/>
</dbReference>
<dbReference type="CDD" id="cd11008">
    <property type="entry name" value="M35_deuterolysin_like"/>
    <property type="match status" value="1"/>
</dbReference>
<dbReference type="Gene3D" id="2.60.40.2970">
    <property type="match status" value="1"/>
</dbReference>
<dbReference type="Gene3D" id="3.40.390.10">
    <property type="entry name" value="Collagenase (Catalytic Domain)"/>
    <property type="match status" value="1"/>
</dbReference>
<dbReference type="InterPro" id="IPR050414">
    <property type="entry name" value="Fungal_M35_metalloproteases"/>
</dbReference>
<dbReference type="InterPro" id="IPR024079">
    <property type="entry name" value="MetalloPept_cat_dom_sf"/>
</dbReference>
<dbReference type="InterPro" id="IPR001384">
    <property type="entry name" value="Peptidase_M35"/>
</dbReference>
<dbReference type="PANTHER" id="PTHR37016">
    <property type="match status" value="1"/>
</dbReference>
<dbReference type="PANTHER" id="PTHR37016:SF3">
    <property type="entry name" value="NEUTRAL PROTEASE 2-RELATED"/>
    <property type="match status" value="1"/>
</dbReference>
<dbReference type="Pfam" id="PF02102">
    <property type="entry name" value="Peptidase_M35"/>
    <property type="match status" value="1"/>
</dbReference>
<dbReference type="PRINTS" id="PR00768">
    <property type="entry name" value="DEUTEROLYSIN"/>
</dbReference>
<dbReference type="SUPFAM" id="SSF55486">
    <property type="entry name" value="Metalloproteases ('zincins'), catalytic domain"/>
    <property type="match status" value="1"/>
</dbReference>
<dbReference type="PROSITE" id="PS00142">
    <property type="entry name" value="ZINC_PROTEASE"/>
    <property type="match status" value="1"/>
</dbReference>
<evidence type="ECO:0000250" key="1"/>
<evidence type="ECO:0000255" key="2"/>
<evidence type="ECO:0000255" key="3">
    <source>
        <dbReference type="PROSITE-ProRule" id="PRU10095"/>
    </source>
</evidence>
<evidence type="ECO:0000305" key="4"/>
<proteinExistence type="inferred from homology"/>
<sequence length="374" mass="39884">MKFLTALSAIGALVATATAAAVPNTPAKQSMIDVQLSATGNTMIKATITNKGDKALNLLQFNTILDKNPTRKVRVYQNGTEVKFTGMLPRYKMSNLSPEYFTSLGPKASVESTFDIARTHDLTRGGKITVMASGTIRTAEGHGANATTITGYARYESNKLELDVDAKKASSVGQAMGKVKKSRGTIDKRTNIDTSSCTQGQLDALEGALYNSAALAQAAAEAAPSNLNTVAEFFKSTSSSTVNTIVSRLQSVASESSYVDYGSTTYYCTDSMNGCSPGVLAYTLPDQNLIFNCPIYYSDLPALAQSCYEQDQATTTLHEMTHNSAVVSPFCDDLGYGYEDATSLSAAQAIQNADSYALFANGKLILHLHEKSGF</sequence>